<gene>
    <name evidence="1" type="primary">secY</name>
    <name type="ordered locus">BUsg_485</name>
</gene>
<dbReference type="EMBL" id="AE013218">
    <property type="protein sequence ID" value="AAM68028.1"/>
    <property type="molecule type" value="Genomic_DNA"/>
</dbReference>
<dbReference type="RefSeq" id="WP_011053994.1">
    <property type="nucleotide sequence ID" value="NC_004061.1"/>
</dbReference>
<dbReference type="SMR" id="Q8K969"/>
<dbReference type="STRING" id="198804.BUsg_485"/>
<dbReference type="GeneID" id="93003960"/>
<dbReference type="KEGG" id="bas:BUsg_485"/>
<dbReference type="eggNOG" id="COG0201">
    <property type="taxonomic scope" value="Bacteria"/>
</dbReference>
<dbReference type="HOGENOM" id="CLU_030313_0_2_6"/>
<dbReference type="Proteomes" id="UP000000416">
    <property type="component" value="Chromosome"/>
</dbReference>
<dbReference type="GO" id="GO:0005886">
    <property type="term" value="C:plasma membrane"/>
    <property type="evidence" value="ECO:0007669"/>
    <property type="project" value="UniProtKB-SubCell"/>
</dbReference>
<dbReference type="GO" id="GO:0065002">
    <property type="term" value="P:intracellular protein transmembrane transport"/>
    <property type="evidence" value="ECO:0007669"/>
    <property type="project" value="UniProtKB-UniRule"/>
</dbReference>
<dbReference type="GO" id="GO:0006605">
    <property type="term" value="P:protein targeting"/>
    <property type="evidence" value="ECO:0007669"/>
    <property type="project" value="UniProtKB-UniRule"/>
</dbReference>
<dbReference type="GO" id="GO:0043952">
    <property type="term" value="P:protein transport by the Sec complex"/>
    <property type="evidence" value="ECO:0007669"/>
    <property type="project" value="UniProtKB-UniRule"/>
</dbReference>
<dbReference type="FunFam" id="1.10.3370.10:FF:000001">
    <property type="entry name" value="Preprotein translocase subunit SecY"/>
    <property type="match status" value="1"/>
</dbReference>
<dbReference type="Gene3D" id="1.10.3370.10">
    <property type="entry name" value="SecY subunit domain"/>
    <property type="match status" value="1"/>
</dbReference>
<dbReference type="HAMAP" id="MF_01465">
    <property type="entry name" value="SecY"/>
    <property type="match status" value="1"/>
</dbReference>
<dbReference type="InterPro" id="IPR026593">
    <property type="entry name" value="SecY"/>
</dbReference>
<dbReference type="InterPro" id="IPR002208">
    <property type="entry name" value="SecY/SEC61-alpha"/>
</dbReference>
<dbReference type="InterPro" id="IPR030659">
    <property type="entry name" value="SecY_CS"/>
</dbReference>
<dbReference type="InterPro" id="IPR023201">
    <property type="entry name" value="SecY_dom_sf"/>
</dbReference>
<dbReference type="NCBIfam" id="TIGR00967">
    <property type="entry name" value="3a0501s007"/>
    <property type="match status" value="1"/>
</dbReference>
<dbReference type="PANTHER" id="PTHR10906">
    <property type="entry name" value="SECY/SEC61-ALPHA FAMILY MEMBER"/>
    <property type="match status" value="1"/>
</dbReference>
<dbReference type="Pfam" id="PF00344">
    <property type="entry name" value="SecY"/>
    <property type="match status" value="1"/>
</dbReference>
<dbReference type="PIRSF" id="PIRSF004557">
    <property type="entry name" value="SecY"/>
    <property type="match status" value="1"/>
</dbReference>
<dbReference type="PRINTS" id="PR00303">
    <property type="entry name" value="SECYTRNLCASE"/>
</dbReference>
<dbReference type="SUPFAM" id="SSF103491">
    <property type="entry name" value="Preprotein translocase SecY subunit"/>
    <property type="match status" value="1"/>
</dbReference>
<dbReference type="PROSITE" id="PS00755">
    <property type="entry name" value="SECY_1"/>
    <property type="match status" value="1"/>
</dbReference>
<dbReference type="PROSITE" id="PS00756">
    <property type="entry name" value="SECY_2"/>
    <property type="match status" value="1"/>
</dbReference>
<keyword id="KW-1003">Cell membrane</keyword>
<keyword id="KW-0472">Membrane</keyword>
<keyword id="KW-0653">Protein transport</keyword>
<keyword id="KW-0811">Translocation</keyword>
<keyword id="KW-0812">Transmembrane</keyword>
<keyword id="KW-1133">Transmembrane helix</keyword>
<keyword id="KW-0813">Transport</keyword>
<reference key="1">
    <citation type="journal article" date="2002" name="Science">
        <title>50 million years of genomic stasis in endosymbiotic bacteria.</title>
        <authorList>
            <person name="Tamas I."/>
            <person name="Klasson L."/>
            <person name="Canbaeck B."/>
            <person name="Naeslund A.K."/>
            <person name="Eriksson A.-S."/>
            <person name="Wernegreen J.J."/>
            <person name="Sandstroem J.P."/>
            <person name="Moran N.A."/>
            <person name="Andersson S.G.E."/>
        </authorList>
    </citation>
    <scope>NUCLEOTIDE SEQUENCE [LARGE SCALE GENOMIC DNA]</scope>
    <source>
        <strain>Sg</strain>
    </source>
</reference>
<proteinExistence type="inferred from homology"/>
<comment type="function">
    <text evidence="1">The central subunit of the protein translocation channel SecYEG. Consists of two halves formed by TMs 1-5 and 6-10. These two domains form a lateral gate at the front which open onto the bilayer between TMs 2 and 7, and are clamped together by SecE at the back. The channel is closed by both a pore ring composed of hydrophobic SecY resides and a short helix (helix 2A) on the extracellular side of the membrane which forms a plug. The plug probably moves laterally to allow the channel to open. The ring and the pore may move independently.</text>
</comment>
<comment type="subunit">
    <text evidence="1">Component of the Sec protein translocase complex. Heterotrimer consisting of SecY, SecE and SecG subunits. The heterotrimers can form oligomers, although 1 heterotrimer is thought to be able to translocate proteins. Interacts with the ribosome. Interacts with SecDF, and other proteins may be involved. Interacts with SecA.</text>
</comment>
<comment type="subcellular location">
    <subcellularLocation>
        <location evidence="1">Cell membrane</location>
        <topology evidence="1">Multi-pass membrane protein</topology>
    </subcellularLocation>
</comment>
<comment type="similarity">
    <text evidence="1">Belongs to the SecY/SEC61-alpha family.</text>
</comment>
<accession>Q8K969</accession>
<name>SECY_BUCAP</name>
<evidence type="ECO:0000255" key="1">
    <source>
        <dbReference type="HAMAP-Rule" id="MF_01465"/>
    </source>
</evidence>
<protein>
    <recommendedName>
        <fullName evidence="1">Protein translocase subunit SecY</fullName>
    </recommendedName>
</protein>
<feature type="chain" id="PRO_0000131715" description="Protein translocase subunit SecY">
    <location>
        <begin position="1"/>
        <end position="439"/>
    </location>
</feature>
<feature type="transmembrane region" description="Helical" evidence="1">
    <location>
        <begin position="23"/>
        <end position="43"/>
    </location>
</feature>
<feature type="transmembrane region" description="Helical" evidence="1">
    <location>
        <begin position="77"/>
        <end position="97"/>
    </location>
</feature>
<feature type="transmembrane region" description="Helical" evidence="1">
    <location>
        <begin position="125"/>
        <end position="145"/>
    </location>
</feature>
<feature type="transmembrane region" description="Helical" evidence="1">
    <location>
        <begin position="154"/>
        <end position="174"/>
    </location>
</feature>
<feature type="transmembrane region" description="Helical" evidence="1">
    <location>
        <begin position="187"/>
        <end position="207"/>
    </location>
</feature>
<feature type="transmembrane region" description="Helical" evidence="1">
    <location>
        <begin position="217"/>
        <end position="237"/>
    </location>
</feature>
<feature type="transmembrane region" description="Helical" evidence="1">
    <location>
        <begin position="274"/>
        <end position="294"/>
    </location>
</feature>
<feature type="transmembrane region" description="Helical" evidence="1">
    <location>
        <begin position="317"/>
        <end position="337"/>
    </location>
</feature>
<feature type="transmembrane region" description="Helical" evidence="1">
    <location>
        <begin position="369"/>
        <end position="389"/>
    </location>
</feature>
<feature type="transmembrane region" description="Helical" evidence="1">
    <location>
        <begin position="397"/>
        <end position="417"/>
    </location>
</feature>
<organism>
    <name type="scientific">Buchnera aphidicola subsp. Schizaphis graminum (strain Sg)</name>
    <dbReference type="NCBI Taxonomy" id="198804"/>
    <lineage>
        <taxon>Bacteria</taxon>
        <taxon>Pseudomonadati</taxon>
        <taxon>Pseudomonadota</taxon>
        <taxon>Gammaproteobacteria</taxon>
        <taxon>Enterobacterales</taxon>
        <taxon>Erwiniaceae</taxon>
        <taxon>Buchnera</taxon>
    </lineage>
</organism>
<sequence>MIKKLGLNFKNTKKVTNELKQRIASVVIALIIFRIGSFIPIPGIDTTILSRILNDQKGTIIEMFNMFSGGALSRASIFALGIMPYISSSIIIQLLTLVIPSLSEIKKEGEVGRTKINQYTRYTTLVLALFQSIGIVTSLPKISGMNQIIIHPDFYFYFTAIIILVTGTMFLMWLGELITECGIGNGISIIIFIGIIAGLPSAIVHTIEQTRQGDLHILLFLCVLILIFSVVFLVVFIERSQRKIIIHYAQRQKGRRIYSTQSTHLPLKINMAGVIPAIFASSVVLFPVTIISWFGIDRKCYLLKTIFFYFQPNQPLYLILYVFSIIFFCFFYTGLVFNPRETADNLKKSGGFISGIRPGEQTAKYINKIMIRLTLFGSLYIAFICLIPEFMRSAMNVPFYFGGTSLLIVVVVIMDFIAQIQTLIMSSQYESVLKKANLN</sequence>